<protein>
    <recommendedName>
        <fullName evidence="1">Histidine ammonia-lyase</fullName>
        <shortName evidence="1">Histidase</shortName>
        <ecNumber evidence="1">4.3.1.3</ecNumber>
    </recommendedName>
</protein>
<accession>Q62LJ6</accession>
<comment type="catalytic activity">
    <reaction evidence="1">
        <text>L-histidine = trans-urocanate + NH4(+)</text>
        <dbReference type="Rhea" id="RHEA:21232"/>
        <dbReference type="ChEBI" id="CHEBI:17771"/>
        <dbReference type="ChEBI" id="CHEBI:28938"/>
        <dbReference type="ChEBI" id="CHEBI:57595"/>
        <dbReference type="EC" id="4.3.1.3"/>
    </reaction>
</comment>
<comment type="pathway">
    <text evidence="1">Amino-acid degradation; L-histidine degradation into L-glutamate; N-formimidoyl-L-glutamate from L-histidine: step 1/3.</text>
</comment>
<comment type="subcellular location">
    <subcellularLocation>
        <location evidence="1">Cytoplasm</location>
    </subcellularLocation>
</comment>
<comment type="PTM">
    <text evidence="1">Contains an active site 4-methylidene-imidazol-5-one (MIO), which is formed autocatalytically by cyclization and dehydration of residues Ala-Ser-Gly.</text>
</comment>
<comment type="similarity">
    <text evidence="1">Belongs to the PAL/histidase family.</text>
</comment>
<comment type="sequence caution" evidence="2">
    <conflict type="erroneous initiation">
        <sequence resource="EMBL-CDS" id="AAU49673"/>
    </conflict>
</comment>
<reference key="1">
    <citation type="journal article" date="2004" name="Proc. Natl. Acad. Sci. U.S.A.">
        <title>Structural flexibility in the Burkholderia mallei genome.</title>
        <authorList>
            <person name="Nierman W.C."/>
            <person name="DeShazer D."/>
            <person name="Kim H.S."/>
            <person name="Tettelin H."/>
            <person name="Nelson K.E."/>
            <person name="Feldblyum T.V."/>
            <person name="Ulrich R.L."/>
            <person name="Ronning C.M."/>
            <person name="Brinkac L.M."/>
            <person name="Daugherty S.C."/>
            <person name="Davidsen T.D."/>
            <person name="DeBoy R.T."/>
            <person name="Dimitrov G."/>
            <person name="Dodson R.J."/>
            <person name="Durkin A.S."/>
            <person name="Gwinn M.L."/>
            <person name="Haft D.H."/>
            <person name="Khouri H.M."/>
            <person name="Kolonay J.F."/>
            <person name="Madupu R."/>
            <person name="Mohammoud Y."/>
            <person name="Nelson W.C."/>
            <person name="Radune D."/>
            <person name="Romero C.M."/>
            <person name="Sarria S."/>
            <person name="Selengut J."/>
            <person name="Shamblin C."/>
            <person name="Sullivan S.A."/>
            <person name="White O."/>
            <person name="Yu Y."/>
            <person name="Zafar N."/>
            <person name="Zhou L."/>
            <person name="Fraser C.M."/>
        </authorList>
    </citation>
    <scope>NUCLEOTIDE SEQUENCE [LARGE SCALE GENOMIC DNA]</scope>
    <source>
        <strain>ATCC 23344</strain>
    </source>
</reference>
<keyword id="KW-0963">Cytoplasm</keyword>
<keyword id="KW-0369">Histidine metabolism</keyword>
<keyword id="KW-0456">Lyase</keyword>
<keyword id="KW-1185">Reference proteome</keyword>
<evidence type="ECO:0000255" key="1">
    <source>
        <dbReference type="HAMAP-Rule" id="MF_00229"/>
    </source>
</evidence>
<evidence type="ECO:0000305" key="2"/>
<organism>
    <name type="scientific">Burkholderia mallei (strain ATCC 23344)</name>
    <dbReference type="NCBI Taxonomy" id="243160"/>
    <lineage>
        <taxon>Bacteria</taxon>
        <taxon>Pseudomonadati</taxon>
        <taxon>Pseudomonadota</taxon>
        <taxon>Betaproteobacteria</taxon>
        <taxon>Burkholderiales</taxon>
        <taxon>Burkholderiaceae</taxon>
        <taxon>Burkholderia</taxon>
        <taxon>pseudomallei group</taxon>
    </lineage>
</organism>
<proteinExistence type="inferred from homology"/>
<feature type="chain" id="PRO_0000160997" description="Histidine ammonia-lyase">
    <location>
        <begin position="1"/>
        <end position="507"/>
    </location>
</feature>
<feature type="modified residue" description="2,3-didehydroalanine (Ser)" evidence="1">
    <location>
        <position position="142"/>
    </location>
</feature>
<feature type="cross-link" description="5-imidazolinone (Ala-Gly)" evidence="1">
    <location>
        <begin position="141"/>
        <end position="143"/>
    </location>
</feature>
<gene>
    <name evidence="1" type="primary">hutH</name>
    <name type="ordered locus">BMA0645</name>
</gene>
<sequence>MITLTPGRLTLPQLRRIARENVQIALDPASFAAIDRGAQAVADIAAKGEPAYGINTGFGRLASTHIPHDQLELLQKNLVLSHAVGVGEPMARPVVRLLMALKLSSLGRGHSGIRRVVMDALVTLFNADVLPLIPVKGSVGASGDLAPLAHMSAVLLGIGDVFIRGERASAAEGLRVAGLAPLTLEAKEGLALLNGTQASTALALDNLFAIEDLYRTALVSGALSVDAAAGSVKPFDARIHELRGHRGQIDAAAAYRSLLDGSAINVSHRDCDKVQDPYSLRCQPQVMGACLDQIRHAAGVLLIEANAVSDNPLIFPDTGEVLSGGNFHAEPVAFAADNLAIAAAEIGALAERRIALLIDATLSGLPPFLVKDGGVNSGFMIAHVTAAALASENKTLAHPASVDSLPTSANQEDHVSMATFAARKLTDIAENVANILAIELLAAAQGVDLRAPHATSPALQHAMKTIRADVAHYDLDHYFAPDIAVVARRVRERAFATLSPLSFESEQ</sequence>
<name>HUTH_BURMA</name>
<dbReference type="EC" id="4.3.1.3" evidence="1"/>
<dbReference type="EMBL" id="CP000010">
    <property type="protein sequence ID" value="AAU49673.1"/>
    <property type="status" value="ALT_INIT"/>
    <property type="molecule type" value="Genomic_DNA"/>
</dbReference>
<dbReference type="RefSeq" id="WP_004192520.1">
    <property type="nucleotide sequence ID" value="NC_006348.1"/>
</dbReference>
<dbReference type="RefSeq" id="YP_102423.1">
    <property type="nucleotide sequence ID" value="NC_006348.1"/>
</dbReference>
<dbReference type="SMR" id="Q62LJ6"/>
<dbReference type="GeneID" id="92978410"/>
<dbReference type="KEGG" id="bma:BMA0645"/>
<dbReference type="PATRIC" id="fig|243160.12.peg.666"/>
<dbReference type="eggNOG" id="COG2986">
    <property type="taxonomic scope" value="Bacteria"/>
</dbReference>
<dbReference type="HOGENOM" id="CLU_014801_4_0_4"/>
<dbReference type="UniPathway" id="UPA00379">
    <property type="reaction ID" value="UER00549"/>
</dbReference>
<dbReference type="Proteomes" id="UP000006693">
    <property type="component" value="Chromosome 1"/>
</dbReference>
<dbReference type="GO" id="GO:0005737">
    <property type="term" value="C:cytoplasm"/>
    <property type="evidence" value="ECO:0007669"/>
    <property type="project" value="UniProtKB-SubCell"/>
</dbReference>
<dbReference type="GO" id="GO:0004397">
    <property type="term" value="F:histidine ammonia-lyase activity"/>
    <property type="evidence" value="ECO:0007669"/>
    <property type="project" value="UniProtKB-UniRule"/>
</dbReference>
<dbReference type="GO" id="GO:0019556">
    <property type="term" value="P:L-histidine catabolic process to glutamate and formamide"/>
    <property type="evidence" value="ECO:0007669"/>
    <property type="project" value="UniProtKB-UniPathway"/>
</dbReference>
<dbReference type="GO" id="GO:0019557">
    <property type="term" value="P:L-histidine catabolic process to glutamate and formate"/>
    <property type="evidence" value="ECO:0007669"/>
    <property type="project" value="UniProtKB-UniPathway"/>
</dbReference>
<dbReference type="CDD" id="cd00332">
    <property type="entry name" value="PAL-HAL"/>
    <property type="match status" value="1"/>
</dbReference>
<dbReference type="FunFam" id="1.10.275.10:FF:000005">
    <property type="entry name" value="Histidine ammonia-lyase"/>
    <property type="match status" value="1"/>
</dbReference>
<dbReference type="FunFam" id="1.20.200.10:FF:000003">
    <property type="entry name" value="Histidine ammonia-lyase"/>
    <property type="match status" value="1"/>
</dbReference>
<dbReference type="Gene3D" id="1.20.200.10">
    <property type="entry name" value="Fumarase/aspartase (Central domain)"/>
    <property type="match status" value="1"/>
</dbReference>
<dbReference type="Gene3D" id="1.10.275.10">
    <property type="entry name" value="Fumarase/aspartase (N-terminal domain)"/>
    <property type="match status" value="1"/>
</dbReference>
<dbReference type="HAMAP" id="MF_00229">
    <property type="entry name" value="His_ammonia_lyase"/>
    <property type="match status" value="1"/>
</dbReference>
<dbReference type="InterPro" id="IPR001106">
    <property type="entry name" value="Aromatic_Lyase"/>
</dbReference>
<dbReference type="InterPro" id="IPR024083">
    <property type="entry name" value="Fumarase/histidase_N"/>
</dbReference>
<dbReference type="InterPro" id="IPR005921">
    <property type="entry name" value="HutH"/>
</dbReference>
<dbReference type="InterPro" id="IPR008948">
    <property type="entry name" value="L-Aspartase-like"/>
</dbReference>
<dbReference type="InterPro" id="IPR022313">
    <property type="entry name" value="Phe/His_NH3-lyase_AS"/>
</dbReference>
<dbReference type="NCBIfam" id="TIGR01225">
    <property type="entry name" value="hutH"/>
    <property type="match status" value="1"/>
</dbReference>
<dbReference type="NCBIfam" id="NF006871">
    <property type="entry name" value="PRK09367.1"/>
    <property type="match status" value="1"/>
</dbReference>
<dbReference type="PANTHER" id="PTHR10362">
    <property type="entry name" value="HISTIDINE AMMONIA-LYASE"/>
    <property type="match status" value="1"/>
</dbReference>
<dbReference type="Pfam" id="PF00221">
    <property type="entry name" value="Lyase_aromatic"/>
    <property type="match status" value="1"/>
</dbReference>
<dbReference type="SUPFAM" id="SSF48557">
    <property type="entry name" value="L-aspartase-like"/>
    <property type="match status" value="1"/>
</dbReference>
<dbReference type="PROSITE" id="PS00488">
    <property type="entry name" value="PAL_HISTIDASE"/>
    <property type="match status" value="1"/>
</dbReference>